<dbReference type="EC" id="1.1.5.4" evidence="1"/>
<dbReference type="EMBL" id="CP000459">
    <property type="protein sequence ID" value="ABK09915.1"/>
    <property type="status" value="ALT_INIT"/>
    <property type="molecule type" value="Genomic_DNA"/>
</dbReference>
<dbReference type="SMR" id="A0AWY9"/>
<dbReference type="KEGG" id="bch:Bcen2424_3168"/>
<dbReference type="HOGENOM" id="CLU_028151_0_0_4"/>
<dbReference type="UniPathway" id="UPA00223">
    <property type="reaction ID" value="UER01008"/>
</dbReference>
<dbReference type="GO" id="GO:0047545">
    <property type="term" value="F:2-hydroxyglutarate dehydrogenase activity"/>
    <property type="evidence" value="ECO:0007669"/>
    <property type="project" value="TreeGrafter"/>
</dbReference>
<dbReference type="GO" id="GO:0008924">
    <property type="term" value="F:L-malate dehydrogenase (quinone) activity"/>
    <property type="evidence" value="ECO:0007669"/>
    <property type="project" value="UniProtKB-UniRule"/>
</dbReference>
<dbReference type="GO" id="GO:0006099">
    <property type="term" value="P:tricarboxylic acid cycle"/>
    <property type="evidence" value="ECO:0007669"/>
    <property type="project" value="UniProtKB-UniRule"/>
</dbReference>
<dbReference type="HAMAP" id="MF_00212">
    <property type="entry name" value="MQO"/>
    <property type="match status" value="1"/>
</dbReference>
<dbReference type="InterPro" id="IPR036188">
    <property type="entry name" value="FAD/NAD-bd_sf"/>
</dbReference>
<dbReference type="InterPro" id="IPR006231">
    <property type="entry name" value="MQO"/>
</dbReference>
<dbReference type="NCBIfam" id="TIGR01320">
    <property type="entry name" value="mal_quin_oxido"/>
    <property type="match status" value="1"/>
</dbReference>
<dbReference type="NCBIfam" id="NF003603">
    <property type="entry name" value="PRK05257.1-1"/>
    <property type="match status" value="1"/>
</dbReference>
<dbReference type="NCBIfam" id="NF003605">
    <property type="entry name" value="PRK05257.1-4"/>
    <property type="match status" value="1"/>
</dbReference>
<dbReference type="NCBIfam" id="NF003606">
    <property type="entry name" value="PRK05257.2-1"/>
    <property type="match status" value="1"/>
</dbReference>
<dbReference type="NCBIfam" id="NF003609">
    <property type="entry name" value="PRK05257.2-5"/>
    <property type="match status" value="1"/>
</dbReference>
<dbReference type="NCBIfam" id="NF003611">
    <property type="entry name" value="PRK05257.3-2"/>
    <property type="match status" value="1"/>
</dbReference>
<dbReference type="NCBIfam" id="NF009875">
    <property type="entry name" value="PRK13339.1"/>
    <property type="match status" value="1"/>
</dbReference>
<dbReference type="PANTHER" id="PTHR43104">
    <property type="entry name" value="L-2-HYDROXYGLUTARATE DEHYDROGENASE, MITOCHONDRIAL"/>
    <property type="match status" value="1"/>
</dbReference>
<dbReference type="PANTHER" id="PTHR43104:SF2">
    <property type="entry name" value="L-2-HYDROXYGLUTARATE DEHYDROGENASE, MITOCHONDRIAL"/>
    <property type="match status" value="1"/>
</dbReference>
<dbReference type="Pfam" id="PF06039">
    <property type="entry name" value="Mqo"/>
    <property type="match status" value="1"/>
</dbReference>
<dbReference type="SUPFAM" id="SSF51905">
    <property type="entry name" value="FAD/NAD(P)-binding domain"/>
    <property type="match status" value="1"/>
</dbReference>
<organism>
    <name type="scientific">Burkholderia cenocepacia (strain HI2424)</name>
    <dbReference type="NCBI Taxonomy" id="331272"/>
    <lineage>
        <taxon>Bacteria</taxon>
        <taxon>Pseudomonadati</taxon>
        <taxon>Pseudomonadota</taxon>
        <taxon>Betaproteobacteria</taxon>
        <taxon>Burkholderiales</taxon>
        <taxon>Burkholderiaceae</taxon>
        <taxon>Burkholderia</taxon>
        <taxon>Burkholderia cepacia complex</taxon>
    </lineage>
</organism>
<feature type="chain" id="PRO_0000325490" description="Probable malate:quinone oxidoreductase">
    <location>
        <begin position="1"/>
        <end position="553"/>
    </location>
</feature>
<feature type="region of interest" description="Disordered" evidence="2">
    <location>
        <begin position="524"/>
        <end position="553"/>
    </location>
</feature>
<name>MQO_BURCH</name>
<sequence>MKKGSAVIKTLRVILSALALCVATSSAHAADTKKVDVLLVGGGIMSSTLGVWLHELQPNWSMTMVERLDGVALESSNGWNNAGTGHSALAELNYTPEKADGKVDISKAIEINESFQISRQFWAWQVKQGVLKNPHSFINSTPHMSFVWGDDNVRFLKKRYEALQASPLFRGMQYSEDYDQIKQWVPLMMEGRDRNQKVAATWTPIGTDVNFGEITRQFVGYLKTQPNFTLSLSSEVREITRNADGTWHVSWVKLHSDEPPQSVDAKFVFIGAGGGALHLLQASGIPEAKDYGAFPVGGSFLVTDNPEVVKQHLAKAYGKASVGSPPMSVPHLDTRIIDGKKIILFGPFATFSTKFLKNGSYFDLAKSTNLHNVAPMMRVGVDEFPLVQYLAGQLMLTDDDRFNALKEYFPNAKKEDWRLWQAGQRVQIIKRDPVKGGVLKLGTEIVASQDGSIAGLLGASPGASTAAPIMLNLMQKVFKDKVATPEWQQKIRQIVPSYGTKLNDSPAKVVEEWTYTSDVLQLSPPPKIDLGAPSQATGNAPARPAKASADMAL</sequence>
<evidence type="ECO:0000255" key="1">
    <source>
        <dbReference type="HAMAP-Rule" id="MF_00212"/>
    </source>
</evidence>
<evidence type="ECO:0000256" key="2">
    <source>
        <dbReference type="SAM" id="MobiDB-lite"/>
    </source>
</evidence>
<evidence type="ECO:0000305" key="3"/>
<proteinExistence type="inferred from homology"/>
<reference key="1">
    <citation type="submission" date="2006-08" db="EMBL/GenBank/DDBJ databases">
        <title>Complete sequence of chromosome 2 of Burkholderia cenocepacia HI2424.</title>
        <authorList>
            <person name="Copeland A."/>
            <person name="Lucas S."/>
            <person name="Lapidus A."/>
            <person name="Barry K."/>
            <person name="Detter J.C."/>
            <person name="Glavina del Rio T."/>
            <person name="Hammon N."/>
            <person name="Israni S."/>
            <person name="Pitluck S."/>
            <person name="Chain P."/>
            <person name="Malfatti S."/>
            <person name="Shin M."/>
            <person name="Vergez L."/>
            <person name="Schmutz J."/>
            <person name="Larimer F."/>
            <person name="Land M."/>
            <person name="Hauser L."/>
            <person name="Kyrpides N."/>
            <person name="Kim E."/>
            <person name="LiPuma J.J."/>
            <person name="Gonzalez C.F."/>
            <person name="Konstantinidis K."/>
            <person name="Tiedje J.M."/>
            <person name="Richardson P."/>
        </authorList>
    </citation>
    <scope>NUCLEOTIDE SEQUENCE [LARGE SCALE GENOMIC DNA]</scope>
    <source>
        <strain>HI2424</strain>
    </source>
</reference>
<keyword id="KW-0274">FAD</keyword>
<keyword id="KW-0285">Flavoprotein</keyword>
<keyword id="KW-0560">Oxidoreductase</keyword>
<keyword id="KW-0816">Tricarboxylic acid cycle</keyword>
<accession>A0AWY9</accession>
<gene>
    <name evidence="1" type="primary">mqo</name>
    <name type="ordered locus">Bcen2424_3168</name>
</gene>
<protein>
    <recommendedName>
        <fullName evidence="1">Probable malate:quinone oxidoreductase</fullName>
        <ecNumber evidence="1">1.1.5.4</ecNumber>
    </recommendedName>
    <alternativeName>
        <fullName evidence="1">MQO</fullName>
    </alternativeName>
    <alternativeName>
        <fullName evidence="1">Malate dehydrogenase [quinone]</fullName>
    </alternativeName>
</protein>
<comment type="catalytic activity">
    <reaction evidence="1">
        <text>(S)-malate + a quinone = a quinol + oxaloacetate</text>
        <dbReference type="Rhea" id="RHEA:46012"/>
        <dbReference type="ChEBI" id="CHEBI:15589"/>
        <dbReference type="ChEBI" id="CHEBI:16452"/>
        <dbReference type="ChEBI" id="CHEBI:24646"/>
        <dbReference type="ChEBI" id="CHEBI:132124"/>
        <dbReference type="EC" id="1.1.5.4"/>
    </reaction>
</comment>
<comment type="cofactor">
    <cofactor evidence="1">
        <name>FAD</name>
        <dbReference type="ChEBI" id="CHEBI:57692"/>
    </cofactor>
</comment>
<comment type="pathway">
    <text evidence="1">Carbohydrate metabolism; tricarboxylic acid cycle; oxaloacetate from (S)-malate (quinone route): step 1/1.</text>
</comment>
<comment type="similarity">
    <text evidence="1">Belongs to the MQO family.</text>
</comment>
<comment type="sequence caution" evidence="3">
    <conflict type="erroneous initiation">
        <sequence resource="EMBL-CDS" id="ABK09915"/>
    </conflict>
</comment>